<keyword id="KW-0687">Ribonucleoprotein</keyword>
<keyword id="KW-0689">Ribosomal protein</keyword>
<keyword id="KW-0694">RNA-binding</keyword>
<keyword id="KW-0699">rRNA-binding</keyword>
<accession>A4FVX8</accession>
<comment type="function">
    <text evidence="1">Protein S19 forms a complex with S13 that binds strongly to the 16S ribosomal RNA.</text>
</comment>
<comment type="similarity">
    <text evidence="1">Belongs to the universal ribosomal protein uS19 family.</text>
</comment>
<feature type="chain" id="PRO_0000354314" description="Small ribosomal subunit protein uS19">
    <location>
        <begin position="1"/>
        <end position="161"/>
    </location>
</feature>
<feature type="region of interest" description="Disordered" evidence="2">
    <location>
        <begin position="1"/>
        <end position="26"/>
    </location>
</feature>
<feature type="compositionally biased region" description="Basic residues" evidence="2">
    <location>
        <begin position="1"/>
        <end position="19"/>
    </location>
</feature>
<name>RS19_METM5</name>
<reference key="1">
    <citation type="submission" date="2007-03" db="EMBL/GenBank/DDBJ databases">
        <title>Complete sequence of chromosome of Methanococcus maripaludis C5.</title>
        <authorList>
            <consortium name="US DOE Joint Genome Institute"/>
            <person name="Copeland A."/>
            <person name="Lucas S."/>
            <person name="Lapidus A."/>
            <person name="Barry K."/>
            <person name="Glavina del Rio T."/>
            <person name="Dalin E."/>
            <person name="Tice H."/>
            <person name="Pitluck S."/>
            <person name="Chertkov O."/>
            <person name="Brettin T."/>
            <person name="Bruce D."/>
            <person name="Han C."/>
            <person name="Detter J.C."/>
            <person name="Schmutz J."/>
            <person name="Larimer F."/>
            <person name="Land M."/>
            <person name="Hauser L."/>
            <person name="Kyrpides N."/>
            <person name="Mikhailova N."/>
            <person name="Sieprawska-Lupa M."/>
            <person name="Whitman W.B."/>
            <person name="Richardson P."/>
        </authorList>
    </citation>
    <scope>NUCLEOTIDE SEQUENCE [LARGE SCALE GENOMIC DNA]</scope>
    <source>
        <strain>C5 / ATCC BAA-1333</strain>
    </source>
</reference>
<protein>
    <recommendedName>
        <fullName evidence="1">Small ribosomal subunit protein uS19</fullName>
    </recommendedName>
    <alternativeName>
        <fullName evidence="3">30S ribosomal protein S19</fullName>
    </alternativeName>
</protein>
<evidence type="ECO:0000255" key="1">
    <source>
        <dbReference type="HAMAP-Rule" id="MF_00531"/>
    </source>
</evidence>
<evidence type="ECO:0000256" key="2">
    <source>
        <dbReference type="SAM" id="MobiDB-lite"/>
    </source>
</evidence>
<evidence type="ECO:0000305" key="3"/>
<gene>
    <name evidence="1" type="primary">rps19</name>
    <name type="ordered locus">MmarC5_0029</name>
</gene>
<organism>
    <name type="scientific">Methanococcus maripaludis (strain C5 / ATCC BAA-1333)</name>
    <dbReference type="NCBI Taxonomy" id="402880"/>
    <lineage>
        <taxon>Archaea</taxon>
        <taxon>Methanobacteriati</taxon>
        <taxon>Methanobacteriota</taxon>
        <taxon>Methanomada group</taxon>
        <taxon>Methanococci</taxon>
        <taxon>Methanococcales</taxon>
        <taxon>Methanococcaceae</taxon>
        <taxon>Methanococcus</taxon>
    </lineage>
</organism>
<dbReference type="EMBL" id="CP000609">
    <property type="protein sequence ID" value="ABO34346.1"/>
    <property type="molecule type" value="Genomic_DNA"/>
</dbReference>
<dbReference type="RefSeq" id="WP_011867808.1">
    <property type="nucleotide sequence ID" value="NC_009135.1"/>
</dbReference>
<dbReference type="SMR" id="A4FVX8"/>
<dbReference type="STRING" id="402880.MmarC5_0029"/>
<dbReference type="GeneID" id="4928106"/>
<dbReference type="KEGG" id="mmq:MmarC5_0029"/>
<dbReference type="eggNOG" id="arCOG04099">
    <property type="taxonomic scope" value="Archaea"/>
</dbReference>
<dbReference type="HOGENOM" id="CLU_097347_1_1_2"/>
<dbReference type="OrthoDB" id="30559at2157"/>
<dbReference type="Proteomes" id="UP000000253">
    <property type="component" value="Chromosome"/>
</dbReference>
<dbReference type="GO" id="GO:0022627">
    <property type="term" value="C:cytosolic small ribosomal subunit"/>
    <property type="evidence" value="ECO:0007669"/>
    <property type="project" value="TreeGrafter"/>
</dbReference>
<dbReference type="GO" id="GO:0019843">
    <property type="term" value="F:rRNA binding"/>
    <property type="evidence" value="ECO:0007669"/>
    <property type="project" value="UniProtKB-UniRule"/>
</dbReference>
<dbReference type="GO" id="GO:0003735">
    <property type="term" value="F:structural constituent of ribosome"/>
    <property type="evidence" value="ECO:0007669"/>
    <property type="project" value="InterPro"/>
</dbReference>
<dbReference type="GO" id="GO:0000028">
    <property type="term" value="P:ribosomal small subunit assembly"/>
    <property type="evidence" value="ECO:0007669"/>
    <property type="project" value="TreeGrafter"/>
</dbReference>
<dbReference type="GO" id="GO:0006412">
    <property type="term" value="P:translation"/>
    <property type="evidence" value="ECO:0007669"/>
    <property type="project" value="UniProtKB-UniRule"/>
</dbReference>
<dbReference type="FunFam" id="3.30.860.10:FF:000002">
    <property type="entry name" value="40S ribosomal protein S15"/>
    <property type="match status" value="1"/>
</dbReference>
<dbReference type="Gene3D" id="3.30.860.10">
    <property type="entry name" value="30s Ribosomal Protein S19, Chain A"/>
    <property type="match status" value="1"/>
</dbReference>
<dbReference type="HAMAP" id="MF_00531">
    <property type="entry name" value="Ribosomal_uS19"/>
    <property type="match status" value="1"/>
</dbReference>
<dbReference type="InterPro" id="IPR002222">
    <property type="entry name" value="Ribosomal_uS19"/>
</dbReference>
<dbReference type="InterPro" id="IPR020934">
    <property type="entry name" value="Ribosomal_uS19_CS"/>
</dbReference>
<dbReference type="InterPro" id="IPR005713">
    <property type="entry name" value="Ribosomal_uS19_euk/arc"/>
</dbReference>
<dbReference type="InterPro" id="IPR023575">
    <property type="entry name" value="Ribosomal_uS19_SF"/>
</dbReference>
<dbReference type="NCBIfam" id="NF003121">
    <property type="entry name" value="PRK04038.1"/>
    <property type="match status" value="1"/>
</dbReference>
<dbReference type="NCBIfam" id="TIGR01025">
    <property type="entry name" value="uS19_arch"/>
    <property type="match status" value="1"/>
</dbReference>
<dbReference type="PANTHER" id="PTHR11880">
    <property type="entry name" value="RIBOSOMAL PROTEIN S19P FAMILY MEMBER"/>
    <property type="match status" value="1"/>
</dbReference>
<dbReference type="PANTHER" id="PTHR11880:SF2">
    <property type="entry name" value="SMALL RIBOSOMAL SUBUNIT PROTEIN US19"/>
    <property type="match status" value="1"/>
</dbReference>
<dbReference type="Pfam" id="PF00203">
    <property type="entry name" value="Ribosomal_S19"/>
    <property type="match status" value="1"/>
</dbReference>
<dbReference type="PIRSF" id="PIRSF002144">
    <property type="entry name" value="Ribosomal_S19"/>
    <property type="match status" value="1"/>
</dbReference>
<dbReference type="PRINTS" id="PR00975">
    <property type="entry name" value="RIBOSOMALS19"/>
</dbReference>
<dbReference type="SUPFAM" id="SSF54570">
    <property type="entry name" value="Ribosomal protein S19"/>
    <property type="match status" value="1"/>
</dbReference>
<dbReference type="PROSITE" id="PS00323">
    <property type="entry name" value="RIBOSOMAL_S19"/>
    <property type="match status" value="1"/>
</dbReference>
<proteinExistence type="inferred from homology"/>
<sequence>MARQKKYSGKGGARKKNKQKQNVAPRRRVEFKYKGFTLEELQEMPIKKFMEIVPSRQRRTMARGITPKQRKLVMKIKKARRLTNRGKEARVIRTHCRDFVITPEMIGLTFGIYNGKEFKEIKLVEETVGRFLGEMAPTRAVVQHGSPGMGATRGSMFVPIK</sequence>